<protein>
    <recommendedName>
        <fullName evidence="1">Bifunctional protein GlmU</fullName>
    </recommendedName>
    <domain>
        <recommendedName>
            <fullName evidence="1">UDP-N-acetylglucosamine pyrophosphorylase</fullName>
            <ecNumber evidence="1">2.7.7.23</ecNumber>
        </recommendedName>
        <alternativeName>
            <fullName evidence="1">N-acetylglucosamine-1-phosphate uridyltransferase</fullName>
        </alternativeName>
    </domain>
    <domain>
        <recommendedName>
            <fullName evidence="1">Glucosamine-1-phosphate N-acetyltransferase</fullName>
            <ecNumber evidence="1">2.3.1.157</ecNumber>
        </recommendedName>
    </domain>
</protein>
<proteinExistence type="inferred from homology"/>
<dbReference type="EC" id="2.7.7.23" evidence="1"/>
<dbReference type="EC" id="2.3.1.157" evidence="1"/>
<dbReference type="EMBL" id="CP001079">
    <property type="protein sequence ID" value="ACM48934.1"/>
    <property type="molecule type" value="Genomic_DNA"/>
</dbReference>
<dbReference type="RefSeq" id="WP_010266857.1">
    <property type="nucleotide sequence ID" value="NC_012026.1"/>
</dbReference>
<dbReference type="SMR" id="B9KHH2"/>
<dbReference type="STRING" id="320483.AMF_038"/>
<dbReference type="GeneID" id="7398759"/>
<dbReference type="KEGG" id="amf:AMF_038"/>
<dbReference type="eggNOG" id="COG1207">
    <property type="taxonomic scope" value="Bacteria"/>
</dbReference>
<dbReference type="HOGENOM" id="CLU_029499_15_2_5"/>
<dbReference type="UniPathway" id="UPA00113">
    <property type="reaction ID" value="UER00532"/>
</dbReference>
<dbReference type="UniPathway" id="UPA00113">
    <property type="reaction ID" value="UER00533"/>
</dbReference>
<dbReference type="UniPathway" id="UPA00973"/>
<dbReference type="Proteomes" id="UP000007307">
    <property type="component" value="Chromosome"/>
</dbReference>
<dbReference type="GO" id="GO:0005737">
    <property type="term" value="C:cytoplasm"/>
    <property type="evidence" value="ECO:0007669"/>
    <property type="project" value="UniProtKB-SubCell"/>
</dbReference>
<dbReference type="GO" id="GO:0016020">
    <property type="term" value="C:membrane"/>
    <property type="evidence" value="ECO:0007669"/>
    <property type="project" value="GOC"/>
</dbReference>
<dbReference type="GO" id="GO:0019134">
    <property type="term" value="F:glucosamine-1-phosphate N-acetyltransferase activity"/>
    <property type="evidence" value="ECO:0007669"/>
    <property type="project" value="UniProtKB-UniRule"/>
</dbReference>
<dbReference type="GO" id="GO:0000287">
    <property type="term" value="F:magnesium ion binding"/>
    <property type="evidence" value="ECO:0007669"/>
    <property type="project" value="UniProtKB-UniRule"/>
</dbReference>
<dbReference type="GO" id="GO:0003977">
    <property type="term" value="F:UDP-N-acetylglucosamine diphosphorylase activity"/>
    <property type="evidence" value="ECO:0007669"/>
    <property type="project" value="UniProtKB-UniRule"/>
</dbReference>
<dbReference type="GO" id="GO:0000902">
    <property type="term" value="P:cell morphogenesis"/>
    <property type="evidence" value="ECO:0007669"/>
    <property type="project" value="UniProtKB-UniRule"/>
</dbReference>
<dbReference type="GO" id="GO:0071555">
    <property type="term" value="P:cell wall organization"/>
    <property type="evidence" value="ECO:0007669"/>
    <property type="project" value="UniProtKB-KW"/>
</dbReference>
<dbReference type="GO" id="GO:0009245">
    <property type="term" value="P:lipid A biosynthetic process"/>
    <property type="evidence" value="ECO:0007669"/>
    <property type="project" value="UniProtKB-UniRule"/>
</dbReference>
<dbReference type="GO" id="GO:0009252">
    <property type="term" value="P:peptidoglycan biosynthetic process"/>
    <property type="evidence" value="ECO:0007669"/>
    <property type="project" value="UniProtKB-UniRule"/>
</dbReference>
<dbReference type="GO" id="GO:0008360">
    <property type="term" value="P:regulation of cell shape"/>
    <property type="evidence" value="ECO:0007669"/>
    <property type="project" value="UniProtKB-KW"/>
</dbReference>
<dbReference type="GO" id="GO:0006048">
    <property type="term" value="P:UDP-N-acetylglucosamine biosynthetic process"/>
    <property type="evidence" value="ECO:0007669"/>
    <property type="project" value="UniProtKB-UniPathway"/>
</dbReference>
<dbReference type="CDD" id="cd03353">
    <property type="entry name" value="LbH_GlmU_C"/>
    <property type="match status" value="1"/>
</dbReference>
<dbReference type="Gene3D" id="2.160.10.10">
    <property type="entry name" value="Hexapeptide repeat proteins"/>
    <property type="match status" value="1"/>
</dbReference>
<dbReference type="Gene3D" id="3.90.550.10">
    <property type="entry name" value="Spore Coat Polysaccharide Biosynthesis Protein SpsA, Chain A"/>
    <property type="match status" value="1"/>
</dbReference>
<dbReference type="HAMAP" id="MF_01631">
    <property type="entry name" value="GlmU"/>
    <property type="match status" value="1"/>
</dbReference>
<dbReference type="InterPro" id="IPR005882">
    <property type="entry name" value="Bifunctional_GlmU"/>
</dbReference>
<dbReference type="InterPro" id="IPR050065">
    <property type="entry name" value="GlmU-like"/>
</dbReference>
<dbReference type="InterPro" id="IPR038009">
    <property type="entry name" value="GlmU_C_LbH"/>
</dbReference>
<dbReference type="InterPro" id="IPR001451">
    <property type="entry name" value="Hexapep"/>
</dbReference>
<dbReference type="InterPro" id="IPR018357">
    <property type="entry name" value="Hexapep_transf_CS"/>
</dbReference>
<dbReference type="InterPro" id="IPR025877">
    <property type="entry name" value="MobA-like_NTP_Trfase"/>
</dbReference>
<dbReference type="InterPro" id="IPR029044">
    <property type="entry name" value="Nucleotide-diphossugar_trans"/>
</dbReference>
<dbReference type="InterPro" id="IPR011004">
    <property type="entry name" value="Trimer_LpxA-like_sf"/>
</dbReference>
<dbReference type="PANTHER" id="PTHR43584:SF3">
    <property type="entry name" value="BIFUNCTIONAL PROTEIN GLMU"/>
    <property type="match status" value="1"/>
</dbReference>
<dbReference type="PANTHER" id="PTHR43584">
    <property type="entry name" value="NUCLEOTIDYL TRANSFERASE"/>
    <property type="match status" value="1"/>
</dbReference>
<dbReference type="Pfam" id="PF00132">
    <property type="entry name" value="Hexapep"/>
    <property type="match status" value="1"/>
</dbReference>
<dbReference type="Pfam" id="PF14602">
    <property type="entry name" value="Hexapep_2"/>
    <property type="match status" value="1"/>
</dbReference>
<dbReference type="Pfam" id="PF12804">
    <property type="entry name" value="NTP_transf_3"/>
    <property type="match status" value="1"/>
</dbReference>
<dbReference type="SUPFAM" id="SSF53448">
    <property type="entry name" value="Nucleotide-diphospho-sugar transferases"/>
    <property type="match status" value="1"/>
</dbReference>
<dbReference type="SUPFAM" id="SSF51161">
    <property type="entry name" value="Trimeric LpxA-like enzymes"/>
    <property type="match status" value="1"/>
</dbReference>
<dbReference type="PROSITE" id="PS00101">
    <property type="entry name" value="HEXAPEP_TRANSFERASES"/>
    <property type="match status" value="1"/>
</dbReference>
<reference key="1">
    <citation type="journal article" date="2009" name="BMC Genomics">
        <title>Conservation in the face of diversity: multistrain analysis of an intracellular bacterium.</title>
        <authorList>
            <person name="Dark M.J."/>
            <person name="Herndon D.R."/>
            <person name="Kappmeyer L.S."/>
            <person name="Gonzales M.P."/>
            <person name="Nordeen E."/>
            <person name="Palmer G.H."/>
            <person name="Knowles D.P. Jr."/>
            <person name="Brayton K.A."/>
        </authorList>
    </citation>
    <scope>NUCLEOTIDE SEQUENCE [LARGE SCALE GENOMIC DNA]</scope>
    <source>
        <strain>Florida</strain>
    </source>
</reference>
<accession>B9KHH2</accession>
<organism>
    <name type="scientific">Anaplasma marginale (strain Florida)</name>
    <dbReference type="NCBI Taxonomy" id="320483"/>
    <lineage>
        <taxon>Bacteria</taxon>
        <taxon>Pseudomonadati</taxon>
        <taxon>Pseudomonadota</taxon>
        <taxon>Alphaproteobacteria</taxon>
        <taxon>Rickettsiales</taxon>
        <taxon>Anaplasmataceae</taxon>
        <taxon>Anaplasma</taxon>
    </lineage>
</organism>
<name>GLMU_ANAMF</name>
<feature type="chain" id="PRO_1000186393" description="Bifunctional protein GlmU">
    <location>
        <begin position="1"/>
        <end position="428"/>
    </location>
</feature>
<feature type="region of interest" description="Pyrophosphorylase" evidence="1">
    <location>
        <begin position="1"/>
        <end position="221"/>
    </location>
</feature>
<feature type="region of interest" description="Linker" evidence="1">
    <location>
        <begin position="222"/>
        <end position="242"/>
    </location>
</feature>
<feature type="region of interest" description="N-acetyltransferase" evidence="1">
    <location>
        <begin position="243"/>
        <end position="428"/>
    </location>
</feature>
<feature type="active site" description="Proton acceptor" evidence="1">
    <location>
        <position position="338"/>
    </location>
</feature>
<feature type="binding site" evidence="1">
    <location>
        <begin position="6"/>
        <end position="9"/>
    </location>
    <ligand>
        <name>UDP-N-acetyl-alpha-D-glucosamine</name>
        <dbReference type="ChEBI" id="CHEBI:57705"/>
    </ligand>
</feature>
<feature type="binding site" evidence="1">
    <location>
        <position position="20"/>
    </location>
    <ligand>
        <name>UDP-N-acetyl-alpha-D-glucosamine</name>
        <dbReference type="ChEBI" id="CHEBI:57705"/>
    </ligand>
</feature>
<feature type="binding site" evidence="1">
    <location>
        <position position="74"/>
    </location>
    <ligand>
        <name>UDP-N-acetyl-alpha-D-glucosamine</name>
        <dbReference type="ChEBI" id="CHEBI:57705"/>
    </ligand>
</feature>
<feature type="binding site" evidence="1">
    <location>
        <begin position="79"/>
        <end position="80"/>
    </location>
    <ligand>
        <name>UDP-N-acetyl-alpha-D-glucosamine</name>
        <dbReference type="ChEBI" id="CHEBI:57705"/>
    </ligand>
</feature>
<feature type="binding site" evidence="1">
    <location>
        <begin position="103"/>
        <end position="105"/>
    </location>
    <ligand>
        <name>UDP-N-acetyl-alpha-D-glucosamine</name>
        <dbReference type="ChEBI" id="CHEBI:57705"/>
    </ligand>
</feature>
<feature type="binding site" evidence="1">
    <location>
        <position position="105"/>
    </location>
    <ligand>
        <name>Mg(2+)</name>
        <dbReference type="ChEBI" id="CHEBI:18420"/>
    </ligand>
</feature>
<feature type="binding site" evidence="1">
    <location>
        <position position="140"/>
    </location>
    <ligand>
        <name>UDP-N-acetyl-alpha-D-glucosamine</name>
        <dbReference type="ChEBI" id="CHEBI:57705"/>
    </ligand>
</feature>
<feature type="binding site" evidence="1">
    <location>
        <position position="219"/>
    </location>
    <ligand>
        <name>Mg(2+)</name>
        <dbReference type="ChEBI" id="CHEBI:18420"/>
    </ligand>
</feature>
<feature type="binding site" evidence="1">
    <location>
        <position position="219"/>
    </location>
    <ligand>
        <name>UDP-N-acetyl-alpha-D-glucosamine</name>
        <dbReference type="ChEBI" id="CHEBI:57705"/>
    </ligand>
</feature>
<feature type="binding site" evidence="1">
    <location>
        <position position="308"/>
    </location>
    <ligand>
        <name>UDP-N-acetyl-alpha-D-glucosamine</name>
        <dbReference type="ChEBI" id="CHEBI:57705"/>
    </ligand>
</feature>
<feature type="binding site" evidence="1">
    <location>
        <position position="326"/>
    </location>
    <ligand>
        <name>UDP-N-acetyl-alpha-D-glucosamine</name>
        <dbReference type="ChEBI" id="CHEBI:57705"/>
    </ligand>
</feature>
<feature type="binding site" evidence="1">
    <location>
        <position position="341"/>
    </location>
    <ligand>
        <name>UDP-N-acetyl-alpha-D-glucosamine</name>
        <dbReference type="ChEBI" id="CHEBI:57705"/>
    </ligand>
</feature>
<feature type="binding site" evidence="1">
    <location>
        <position position="352"/>
    </location>
    <ligand>
        <name>UDP-N-acetyl-alpha-D-glucosamine</name>
        <dbReference type="ChEBI" id="CHEBI:57705"/>
    </ligand>
</feature>
<feature type="binding site" evidence="1">
    <location>
        <position position="355"/>
    </location>
    <ligand>
        <name>acetyl-CoA</name>
        <dbReference type="ChEBI" id="CHEBI:57288"/>
    </ligand>
</feature>
<feature type="binding site" evidence="1">
    <location>
        <begin position="361"/>
        <end position="362"/>
    </location>
    <ligand>
        <name>acetyl-CoA</name>
        <dbReference type="ChEBI" id="CHEBI:57288"/>
    </ligand>
</feature>
<feature type="binding site" evidence="1">
    <location>
        <position position="398"/>
    </location>
    <ligand>
        <name>acetyl-CoA</name>
        <dbReference type="ChEBI" id="CHEBI:57288"/>
    </ligand>
</feature>
<feature type="binding site" evidence="1">
    <location>
        <position position="415"/>
    </location>
    <ligand>
        <name>acetyl-CoA</name>
        <dbReference type="ChEBI" id="CHEBI:57288"/>
    </ligand>
</feature>
<comment type="function">
    <text evidence="1">Catalyzes the last two sequential reactions in the de novo biosynthetic pathway for UDP-N-acetylglucosamine (UDP-GlcNAc). The C-terminal domain catalyzes the transfer of acetyl group from acetyl coenzyme A to glucosamine-1-phosphate (GlcN-1-P) to produce N-acetylglucosamine-1-phosphate (GlcNAc-1-P), which is converted into UDP-GlcNAc by the transfer of uridine 5-monophosphate (from uridine 5-triphosphate), a reaction catalyzed by the N-terminal domain.</text>
</comment>
<comment type="catalytic activity">
    <reaction evidence="1">
        <text>alpha-D-glucosamine 1-phosphate + acetyl-CoA = N-acetyl-alpha-D-glucosamine 1-phosphate + CoA + H(+)</text>
        <dbReference type="Rhea" id="RHEA:13725"/>
        <dbReference type="ChEBI" id="CHEBI:15378"/>
        <dbReference type="ChEBI" id="CHEBI:57287"/>
        <dbReference type="ChEBI" id="CHEBI:57288"/>
        <dbReference type="ChEBI" id="CHEBI:57776"/>
        <dbReference type="ChEBI" id="CHEBI:58516"/>
        <dbReference type="EC" id="2.3.1.157"/>
    </reaction>
</comment>
<comment type="catalytic activity">
    <reaction evidence="1">
        <text>N-acetyl-alpha-D-glucosamine 1-phosphate + UTP + H(+) = UDP-N-acetyl-alpha-D-glucosamine + diphosphate</text>
        <dbReference type="Rhea" id="RHEA:13509"/>
        <dbReference type="ChEBI" id="CHEBI:15378"/>
        <dbReference type="ChEBI" id="CHEBI:33019"/>
        <dbReference type="ChEBI" id="CHEBI:46398"/>
        <dbReference type="ChEBI" id="CHEBI:57705"/>
        <dbReference type="ChEBI" id="CHEBI:57776"/>
        <dbReference type="EC" id="2.7.7.23"/>
    </reaction>
</comment>
<comment type="cofactor">
    <cofactor evidence="1">
        <name>Mg(2+)</name>
        <dbReference type="ChEBI" id="CHEBI:18420"/>
    </cofactor>
    <text evidence="1">Binds 1 Mg(2+) ion per subunit.</text>
</comment>
<comment type="pathway">
    <text evidence="1">Nucleotide-sugar biosynthesis; UDP-N-acetyl-alpha-D-glucosamine biosynthesis; N-acetyl-alpha-D-glucosamine 1-phosphate from alpha-D-glucosamine 6-phosphate (route II): step 2/2.</text>
</comment>
<comment type="pathway">
    <text evidence="1">Nucleotide-sugar biosynthesis; UDP-N-acetyl-alpha-D-glucosamine biosynthesis; UDP-N-acetyl-alpha-D-glucosamine from N-acetyl-alpha-D-glucosamine 1-phosphate: step 1/1.</text>
</comment>
<comment type="pathway">
    <text evidence="1">Bacterial outer membrane biogenesis; LPS lipid A biosynthesis.</text>
</comment>
<comment type="subunit">
    <text evidence="1">Homotrimer.</text>
</comment>
<comment type="subcellular location">
    <subcellularLocation>
        <location evidence="1">Cytoplasm</location>
    </subcellularLocation>
</comment>
<comment type="similarity">
    <text evidence="1">In the N-terminal section; belongs to the N-acetylglucosamine-1-phosphate uridyltransferase family.</text>
</comment>
<comment type="similarity">
    <text evidence="1">In the C-terminal section; belongs to the transferase hexapeptide repeat family.</text>
</comment>
<gene>
    <name evidence="1" type="primary">glmU</name>
    <name type="ordered locus">AMF_038</name>
</gene>
<keyword id="KW-0012">Acyltransferase</keyword>
<keyword id="KW-0133">Cell shape</keyword>
<keyword id="KW-0961">Cell wall biogenesis/degradation</keyword>
<keyword id="KW-0963">Cytoplasm</keyword>
<keyword id="KW-0460">Magnesium</keyword>
<keyword id="KW-0479">Metal-binding</keyword>
<keyword id="KW-0511">Multifunctional enzyme</keyword>
<keyword id="KW-0548">Nucleotidyltransferase</keyword>
<keyword id="KW-0573">Peptidoglycan synthesis</keyword>
<keyword id="KW-1185">Reference proteome</keyword>
<keyword id="KW-0677">Repeat</keyword>
<keyword id="KW-0808">Transferase</keyword>
<evidence type="ECO:0000255" key="1">
    <source>
        <dbReference type="HAMAP-Rule" id="MF_01631"/>
    </source>
</evidence>
<sequence>MDIVILAAGCGSRMCSTTPKILHKLGNAPIIKHVLQLADELRPKRAVIVTNAAVNGPVAALAGEHNLRLNTVLQGEIAGTGGAATSALQALKNPSEEIVLILYGDTPLLDKATVCHALDRLSSGAKIVLVAFKSENNQYGRIVLGSSGNVLEVSHGRDTNGLAVSGAIAGYRQVISGLLGGLSCRDGELYLTDIVQSAAEKNVEVGYVIADERKAMGINTRADLAIAESYFQCMKRASFLQSGVTLTSPDQVFFSIDTQIAQDVIVHPYVVFGAGVAVEPGAEILSYSHLEFCHIKKGAIVGPFARVRGNSTIDRGCVVGNFVEIKESSLGEMSKVKHLSYLGNSTIGKNTNVGAGTVICNYDGRNKQHSDIGNNCFVGANSTIVSPIKVGDNAAIAAGSVITEDLPPRSLGIARSRQTTKPEYKTRR</sequence>